<reference key="1">
    <citation type="journal article" date="1995" name="Mol. Gen. Genet.">
        <title>Extension of the Rhizobium meliloti succinoglycan biosynthesis gene cluster: identification of the exsA gene encoding an ABC transporter protein, and the exsB gene which probably codes for a regulator of succinoglycan biosynthesis.</title>
        <authorList>
            <person name="Becker A."/>
            <person name="Kuester H."/>
            <person name="Niehaus K."/>
            <person name="Puehler A."/>
        </authorList>
    </citation>
    <scope>NUCLEOTIDE SEQUENCE [GENOMIC DNA]</scope>
    <source>
        <strain>RCR2011 / SU47</strain>
    </source>
</reference>
<reference key="2">
    <citation type="journal article" date="1997" name="Mol. Microbiol.">
        <title>The Rhizobium meliloti exoK gene and prsD/prsE/exsH genes encode components of independent degradative pathways which contribute to production of low-molecular-weight succinoglycan.</title>
        <authorList>
            <person name="York G.M."/>
            <person name="Walker G.C."/>
        </authorList>
    </citation>
    <scope>NUCLEOTIDE SEQUENCE [GENOMIC DNA]</scope>
    <source>
        <strain>RCR2011 / SU47</strain>
    </source>
</reference>
<reference key="3">
    <citation type="journal article" date="2001" name="Proc. Natl. Acad. Sci. U.S.A.">
        <title>The complete sequence of the 1,683-kb pSymB megaplasmid from the N2-fixing endosymbiont Sinorhizobium meliloti.</title>
        <authorList>
            <person name="Finan T.M."/>
            <person name="Weidner S."/>
            <person name="Wong K."/>
            <person name="Buhrmester J."/>
            <person name="Chain P."/>
            <person name="Vorhoelter F.J."/>
            <person name="Hernandez-Lucas I."/>
            <person name="Becker A."/>
            <person name="Cowie A."/>
            <person name="Gouzy J."/>
            <person name="Golding B."/>
            <person name="Puehler A."/>
        </authorList>
    </citation>
    <scope>NUCLEOTIDE SEQUENCE [LARGE SCALE GENOMIC DNA]</scope>
    <source>
        <strain>1021</strain>
    </source>
</reference>
<reference key="4">
    <citation type="journal article" date="2001" name="Science">
        <title>The composite genome of the legume symbiont Sinorhizobium meliloti.</title>
        <authorList>
            <person name="Galibert F."/>
            <person name="Finan T.M."/>
            <person name="Long S.R."/>
            <person name="Puehler A."/>
            <person name="Abola P."/>
            <person name="Ampe F."/>
            <person name="Barloy-Hubler F."/>
            <person name="Barnett M.J."/>
            <person name="Becker A."/>
            <person name="Boistard P."/>
            <person name="Bothe G."/>
            <person name="Boutry M."/>
            <person name="Bowser L."/>
            <person name="Buhrmester J."/>
            <person name="Cadieu E."/>
            <person name="Capela D."/>
            <person name="Chain P."/>
            <person name="Cowie A."/>
            <person name="Davis R.W."/>
            <person name="Dreano S."/>
            <person name="Federspiel N.A."/>
            <person name="Fisher R.F."/>
            <person name="Gloux S."/>
            <person name="Godrie T."/>
            <person name="Goffeau A."/>
            <person name="Golding B."/>
            <person name="Gouzy J."/>
            <person name="Gurjal M."/>
            <person name="Hernandez-Lucas I."/>
            <person name="Hong A."/>
            <person name="Huizar L."/>
            <person name="Hyman R.W."/>
            <person name="Jones T."/>
            <person name="Kahn D."/>
            <person name="Kahn M.L."/>
            <person name="Kalman S."/>
            <person name="Keating D.H."/>
            <person name="Kiss E."/>
            <person name="Komp C."/>
            <person name="Lelaure V."/>
            <person name="Masuy D."/>
            <person name="Palm C."/>
            <person name="Peck M.C."/>
            <person name="Pohl T.M."/>
            <person name="Portetelle D."/>
            <person name="Purnelle B."/>
            <person name="Ramsperger U."/>
            <person name="Surzycki R."/>
            <person name="Thebault P."/>
            <person name="Vandenbol M."/>
            <person name="Vorhoelter F.J."/>
            <person name="Weidner S."/>
            <person name="Wells D.H."/>
            <person name="Wong K."/>
            <person name="Yeh K.-C."/>
            <person name="Batut J."/>
        </authorList>
    </citation>
    <scope>NUCLEOTIDE SEQUENCE [LARGE SCALE GENOMIC DNA]</scope>
    <source>
        <strain>1021</strain>
    </source>
</reference>
<keyword id="KW-0067">ATP-binding</keyword>
<keyword id="KW-0436">Ligase</keyword>
<keyword id="KW-0479">Metal-binding</keyword>
<keyword id="KW-0547">Nucleotide-binding</keyword>
<keyword id="KW-0614">Plasmid</keyword>
<keyword id="KW-0671">Queuosine biosynthesis</keyword>
<keyword id="KW-1185">Reference proteome</keyword>
<keyword id="KW-0862">Zinc</keyword>
<protein>
    <recommendedName>
        <fullName evidence="1">7-cyano-7-deazaguanine synthase</fullName>
        <ecNumber evidence="1">6.3.4.20</ecNumber>
    </recommendedName>
    <alternativeName>
        <fullName evidence="1">7-cyano-7-carbaguanine synthase</fullName>
    </alternativeName>
    <alternativeName>
        <fullName evidence="1">PreQ(0) synthase</fullName>
    </alternativeName>
    <alternativeName>
        <fullName evidence="1">Queuosine biosynthesis protein QueC</fullName>
    </alternativeName>
</protein>
<geneLocation type="plasmid">
    <name>pSymB</name>
    <name>megaplasmid 2</name>
</geneLocation>
<feature type="chain" id="PRO_0000246902" description="7-cyano-7-deazaguanine synthase">
    <location>
        <begin position="1"/>
        <end position="236"/>
    </location>
</feature>
<feature type="binding site" evidence="1">
    <location>
        <begin position="7"/>
        <end position="17"/>
    </location>
    <ligand>
        <name>ATP</name>
        <dbReference type="ChEBI" id="CHEBI:30616"/>
    </ligand>
</feature>
<feature type="binding site" evidence="1">
    <location>
        <position position="185"/>
    </location>
    <ligand>
        <name>Zn(2+)</name>
        <dbReference type="ChEBI" id="CHEBI:29105"/>
    </ligand>
</feature>
<feature type="binding site" evidence="1">
    <location>
        <position position="193"/>
    </location>
    <ligand>
        <name>Zn(2+)</name>
        <dbReference type="ChEBI" id="CHEBI:29105"/>
    </ligand>
</feature>
<feature type="binding site" evidence="1">
    <location>
        <position position="196"/>
    </location>
    <ligand>
        <name>Zn(2+)</name>
        <dbReference type="ChEBI" id="CHEBI:29105"/>
    </ligand>
</feature>
<feature type="binding site" evidence="1">
    <location>
        <position position="199"/>
    </location>
    <ligand>
        <name>Zn(2+)</name>
        <dbReference type="ChEBI" id="CHEBI:29105"/>
    </ligand>
</feature>
<name>QUEC_RHIME</name>
<dbReference type="EC" id="6.3.4.20" evidence="1"/>
<dbReference type="EMBL" id="Z50189">
    <property type="protein sequence ID" value="CAA90569.1"/>
    <property type="status" value="ALT_FRAME"/>
    <property type="molecule type" value="Genomic_DNA"/>
</dbReference>
<dbReference type="EMBL" id="AJ225561">
    <property type="protein sequence ID" value="CAA12530.1"/>
    <property type="status" value="ALT_FRAME"/>
    <property type="molecule type" value="Genomic_DNA"/>
</dbReference>
<dbReference type="EMBL" id="AL591985">
    <property type="protein sequence ID" value="CAC49463.1"/>
    <property type="molecule type" value="Genomic_DNA"/>
</dbReference>
<dbReference type="PIR" id="G95974">
    <property type="entry name" value="G95974"/>
</dbReference>
<dbReference type="PIR" id="S60183">
    <property type="entry name" value="S60183"/>
</dbReference>
<dbReference type="RefSeq" id="NP_437603.1">
    <property type="nucleotide sequence ID" value="NC_003078.1"/>
</dbReference>
<dbReference type="RefSeq" id="WP_010975901.1">
    <property type="nucleotide sequence ID" value="NC_003078.1"/>
</dbReference>
<dbReference type="SMR" id="Q92UN9"/>
<dbReference type="EnsemblBacteria" id="CAC49463">
    <property type="protein sequence ID" value="CAC49463"/>
    <property type="gene ID" value="SM_b20940"/>
</dbReference>
<dbReference type="KEGG" id="sme:SM_b20940"/>
<dbReference type="PATRIC" id="fig|266834.11.peg.5991"/>
<dbReference type="eggNOG" id="COG0603">
    <property type="taxonomic scope" value="Bacteria"/>
</dbReference>
<dbReference type="HOGENOM" id="CLU_081854_1_0_5"/>
<dbReference type="OrthoDB" id="9789567at2"/>
<dbReference type="UniPathway" id="UPA00391"/>
<dbReference type="Proteomes" id="UP000001976">
    <property type="component" value="Plasmid pSymB"/>
</dbReference>
<dbReference type="GO" id="GO:0005524">
    <property type="term" value="F:ATP binding"/>
    <property type="evidence" value="ECO:0007669"/>
    <property type="project" value="UniProtKB-UniRule"/>
</dbReference>
<dbReference type="GO" id="GO:0016879">
    <property type="term" value="F:ligase activity, forming carbon-nitrogen bonds"/>
    <property type="evidence" value="ECO:0007669"/>
    <property type="project" value="UniProtKB-UniRule"/>
</dbReference>
<dbReference type="GO" id="GO:0008270">
    <property type="term" value="F:zinc ion binding"/>
    <property type="evidence" value="ECO:0007669"/>
    <property type="project" value="UniProtKB-UniRule"/>
</dbReference>
<dbReference type="GO" id="GO:0008616">
    <property type="term" value="P:queuosine biosynthetic process"/>
    <property type="evidence" value="ECO:0007669"/>
    <property type="project" value="UniProtKB-UniRule"/>
</dbReference>
<dbReference type="CDD" id="cd01995">
    <property type="entry name" value="QueC-like"/>
    <property type="match status" value="1"/>
</dbReference>
<dbReference type="Gene3D" id="3.40.50.620">
    <property type="entry name" value="HUPs"/>
    <property type="match status" value="1"/>
</dbReference>
<dbReference type="HAMAP" id="MF_01633">
    <property type="entry name" value="QueC"/>
    <property type="match status" value="1"/>
</dbReference>
<dbReference type="InterPro" id="IPR018317">
    <property type="entry name" value="QueC"/>
</dbReference>
<dbReference type="InterPro" id="IPR014729">
    <property type="entry name" value="Rossmann-like_a/b/a_fold"/>
</dbReference>
<dbReference type="NCBIfam" id="TIGR00364">
    <property type="entry name" value="7-cyano-7-deazaguanine synthase QueC"/>
    <property type="match status" value="1"/>
</dbReference>
<dbReference type="PANTHER" id="PTHR42914">
    <property type="entry name" value="7-CYANO-7-DEAZAGUANINE SYNTHASE"/>
    <property type="match status" value="1"/>
</dbReference>
<dbReference type="PANTHER" id="PTHR42914:SF1">
    <property type="entry name" value="7-CYANO-7-DEAZAGUANINE SYNTHASE"/>
    <property type="match status" value="1"/>
</dbReference>
<dbReference type="Pfam" id="PF06508">
    <property type="entry name" value="QueC"/>
    <property type="match status" value="1"/>
</dbReference>
<dbReference type="PIRSF" id="PIRSF006293">
    <property type="entry name" value="ExsB"/>
    <property type="match status" value="1"/>
</dbReference>
<dbReference type="SUPFAM" id="SSF52402">
    <property type="entry name" value="Adenine nucleotide alpha hydrolases-like"/>
    <property type="match status" value="1"/>
</dbReference>
<accession>Q92UN9</accession>
<accession>Q52925</accession>
<sequence>MKTIVICSGGLDSVSLAHKVAAEQELSGLLSFDYGQRHRKELDFAAACARRLGVPHQIIDIREIGRRLTGSALTDEVDVPDGHYAEETMKATVVPNRNAIMLAIAFGVAAARKADAVATAVHGGDHFIYPDCRPGFIDAFQAMQDHALDGYADVALYAPFVNVSKADIVADGARHDTPFAETWSCYKGGARHCGRCGTCVERREAFHLAGVPDPTEYDDPDFWVAATGSFVAEEVK</sequence>
<gene>
    <name evidence="1" type="primary">queC</name>
    <name type="ordered locus">RB1063</name>
    <name type="ORF">SMb20940</name>
</gene>
<organism>
    <name type="scientific">Rhizobium meliloti (strain 1021)</name>
    <name type="common">Ensifer meliloti</name>
    <name type="synonym">Sinorhizobium meliloti</name>
    <dbReference type="NCBI Taxonomy" id="266834"/>
    <lineage>
        <taxon>Bacteria</taxon>
        <taxon>Pseudomonadati</taxon>
        <taxon>Pseudomonadota</taxon>
        <taxon>Alphaproteobacteria</taxon>
        <taxon>Hyphomicrobiales</taxon>
        <taxon>Rhizobiaceae</taxon>
        <taxon>Sinorhizobium/Ensifer group</taxon>
        <taxon>Sinorhizobium</taxon>
    </lineage>
</organism>
<comment type="function">
    <text evidence="1">Catalyzes the ATP-dependent conversion of 7-carboxy-7-deazaguanine (CDG) to 7-cyano-7-deazaguanine (preQ(0)).</text>
</comment>
<comment type="catalytic activity">
    <reaction evidence="1">
        <text>7-carboxy-7-deazaguanine + NH4(+) + ATP = 7-cyano-7-deazaguanine + ADP + phosphate + H2O + H(+)</text>
        <dbReference type="Rhea" id="RHEA:27982"/>
        <dbReference type="ChEBI" id="CHEBI:15377"/>
        <dbReference type="ChEBI" id="CHEBI:15378"/>
        <dbReference type="ChEBI" id="CHEBI:28938"/>
        <dbReference type="ChEBI" id="CHEBI:30616"/>
        <dbReference type="ChEBI" id="CHEBI:43474"/>
        <dbReference type="ChEBI" id="CHEBI:45075"/>
        <dbReference type="ChEBI" id="CHEBI:61036"/>
        <dbReference type="ChEBI" id="CHEBI:456216"/>
        <dbReference type="EC" id="6.3.4.20"/>
    </reaction>
</comment>
<comment type="cofactor">
    <cofactor evidence="1">
        <name>Zn(2+)</name>
        <dbReference type="ChEBI" id="CHEBI:29105"/>
    </cofactor>
    <text evidence="1">Binds 1 zinc ion per subunit.</text>
</comment>
<comment type="pathway">
    <text evidence="1">Purine metabolism; 7-cyano-7-deazaguanine biosynthesis.</text>
</comment>
<comment type="similarity">
    <text evidence="1">Belongs to the QueC family.</text>
</comment>
<comment type="sequence caution" evidence="2">
    <conflict type="frameshift">
        <sequence resource="EMBL-CDS" id="CAA12530"/>
    </conflict>
</comment>
<comment type="sequence caution" evidence="2">
    <conflict type="frameshift">
        <sequence resource="EMBL-CDS" id="CAA90569"/>
    </conflict>
</comment>
<proteinExistence type="inferred from homology"/>
<evidence type="ECO:0000255" key="1">
    <source>
        <dbReference type="HAMAP-Rule" id="MF_01633"/>
    </source>
</evidence>
<evidence type="ECO:0000305" key="2"/>